<name>XYLA_GEOSE</name>
<gene>
    <name type="primary">xylA</name>
</gene>
<proteinExistence type="evidence at protein level"/>
<keyword id="KW-0002">3D-structure</keyword>
<keyword id="KW-0119">Carbohydrate metabolism</keyword>
<keyword id="KW-0963">Cytoplasm</keyword>
<keyword id="KW-0413">Isomerase</keyword>
<keyword id="KW-0464">Manganese</keyword>
<keyword id="KW-0479">Metal-binding</keyword>
<keyword id="KW-0859">Xylose metabolism</keyword>
<evidence type="ECO:0000250" key="1"/>
<evidence type="ECO:0000305" key="2"/>
<evidence type="ECO:0007829" key="3">
    <source>
        <dbReference type="PDB" id="1A0D"/>
    </source>
</evidence>
<accession>P54273</accession>
<dbReference type="EC" id="5.3.1.5"/>
<dbReference type="EMBL" id="X98088">
    <property type="protein sequence ID" value="CAA66715.1"/>
    <property type="molecule type" value="Genomic_DNA"/>
</dbReference>
<dbReference type="PDB" id="1A0D">
    <property type="method" value="X-ray"/>
    <property type="resolution" value="3.00 A"/>
    <property type="chains" value="A/B/C/D=2-441"/>
</dbReference>
<dbReference type="PDBsum" id="1A0D"/>
<dbReference type="SMR" id="P54273"/>
<dbReference type="EvolutionaryTrace" id="P54273"/>
<dbReference type="GO" id="GO:0005737">
    <property type="term" value="C:cytoplasm"/>
    <property type="evidence" value="ECO:0007669"/>
    <property type="project" value="UniProtKB-SubCell"/>
</dbReference>
<dbReference type="GO" id="GO:0000287">
    <property type="term" value="F:magnesium ion binding"/>
    <property type="evidence" value="ECO:0007669"/>
    <property type="project" value="UniProtKB-UniRule"/>
</dbReference>
<dbReference type="GO" id="GO:0009045">
    <property type="term" value="F:xylose isomerase activity"/>
    <property type="evidence" value="ECO:0007669"/>
    <property type="project" value="UniProtKB-UniRule"/>
</dbReference>
<dbReference type="GO" id="GO:0042732">
    <property type="term" value="P:D-xylose metabolic process"/>
    <property type="evidence" value="ECO:0007669"/>
    <property type="project" value="UniProtKB-UniRule"/>
</dbReference>
<dbReference type="FunFam" id="3.20.20.150:FF:000002">
    <property type="entry name" value="Xylose isomerase"/>
    <property type="match status" value="1"/>
</dbReference>
<dbReference type="Gene3D" id="3.20.20.150">
    <property type="entry name" value="Divalent-metal-dependent TIM barrel enzymes"/>
    <property type="match status" value="1"/>
</dbReference>
<dbReference type="HAMAP" id="MF_00455">
    <property type="entry name" value="Xylose_isom_A"/>
    <property type="match status" value="1"/>
</dbReference>
<dbReference type="InterPro" id="IPR036237">
    <property type="entry name" value="Xyl_isomerase-like_sf"/>
</dbReference>
<dbReference type="InterPro" id="IPR013022">
    <property type="entry name" value="Xyl_isomerase-like_TIM-brl"/>
</dbReference>
<dbReference type="InterPro" id="IPR013452">
    <property type="entry name" value="Xylose_isom_bac"/>
</dbReference>
<dbReference type="InterPro" id="IPR001998">
    <property type="entry name" value="Xylose_isomerase"/>
</dbReference>
<dbReference type="NCBIfam" id="NF003998">
    <property type="entry name" value="PRK05474.1"/>
    <property type="match status" value="1"/>
</dbReference>
<dbReference type="NCBIfam" id="TIGR02630">
    <property type="entry name" value="xylose_isom_A"/>
    <property type="match status" value="1"/>
</dbReference>
<dbReference type="PANTHER" id="PTHR48408">
    <property type="match status" value="1"/>
</dbReference>
<dbReference type="PANTHER" id="PTHR48408:SF1">
    <property type="entry name" value="XYLOSE ISOMERASE"/>
    <property type="match status" value="1"/>
</dbReference>
<dbReference type="Pfam" id="PF01261">
    <property type="entry name" value="AP_endonuc_2"/>
    <property type="match status" value="1"/>
</dbReference>
<dbReference type="PRINTS" id="PR00688">
    <property type="entry name" value="XYLOSISMRASE"/>
</dbReference>
<dbReference type="SUPFAM" id="SSF51658">
    <property type="entry name" value="Xylose isomerase-like"/>
    <property type="match status" value="1"/>
</dbReference>
<dbReference type="PROSITE" id="PS51415">
    <property type="entry name" value="XYLOSE_ISOMERASE"/>
    <property type="match status" value="1"/>
</dbReference>
<organism>
    <name type="scientific">Geobacillus stearothermophilus</name>
    <name type="common">Bacillus stearothermophilus</name>
    <dbReference type="NCBI Taxonomy" id="1422"/>
    <lineage>
        <taxon>Bacteria</taxon>
        <taxon>Bacillati</taxon>
        <taxon>Bacillota</taxon>
        <taxon>Bacilli</taxon>
        <taxon>Bacillales</taxon>
        <taxon>Anoxybacillaceae</taxon>
        <taxon>Geobacillus</taxon>
    </lineage>
</organism>
<protein>
    <recommendedName>
        <fullName>Xylose isomerase</fullName>
        <ecNumber>5.3.1.5</ecNumber>
    </recommendedName>
</protein>
<reference key="1">
    <citation type="submission" date="1996-05" db="EMBL/GenBank/DDBJ databases">
        <authorList>
            <person name="Jackson R."/>
            <person name="Brannigan J."/>
            <person name="Taylor M."/>
        </authorList>
    </citation>
    <scope>NUCLEOTIDE SEQUENCE [GENOMIC DNA]</scope>
    <source>
        <strain>NCIMB 12403 / LLD-R</strain>
    </source>
</reference>
<reference key="2">
    <citation type="submission" date="1997-11" db="PDB data bank">
        <title>Crystal structures of class II xylose isomerases from two thermophiles and a hyperthermophile.</title>
        <authorList>
            <person name="Gallay O."/>
            <person name="Chopra R."/>
            <person name="Conti E."/>
            <person name="Brick P."/>
            <person name="Jackson R."/>
            <person name="Hartley B."/>
            <person name="Vieille C."/>
            <person name="Zeikus J.G."/>
            <person name="Blow D."/>
        </authorList>
    </citation>
    <scope>X-RAY CRYSTALLOGRAPHY (3.0 ANGSTROMS)</scope>
    <scope>SEQUENCE REVISION TO 248</scope>
    <source>
        <strain>NCIMB 12403 / LLD-R</strain>
    </source>
</reference>
<comment type="catalytic activity">
    <reaction>
        <text>alpha-D-xylose = alpha-D-xylulofuranose</text>
        <dbReference type="Rhea" id="RHEA:22816"/>
        <dbReference type="ChEBI" id="CHEBI:28518"/>
        <dbReference type="ChEBI" id="CHEBI:188998"/>
        <dbReference type="EC" id="5.3.1.5"/>
    </reaction>
</comment>
<comment type="cofactor">
    <cofactor>
        <name>Mn(2+)</name>
        <dbReference type="ChEBI" id="CHEBI:29035"/>
    </cofactor>
    <text>Binds 2 manganese ions per subunit.</text>
</comment>
<comment type="subunit">
    <text>Homotetramer.</text>
</comment>
<comment type="subcellular location">
    <subcellularLocation>
        <location>Cytoplasm</location>
    </subcellularLocation>
</comment>
<comment type="similarity">
    <text evidence="2">Belongs to the xylose isomerase family.</text>
</comment>
<feature type="chain" id="PRO_0000195766" description="Xylose isomerase">
    <location>
        <begin position="1"/>
        <end position="441"/>
    </location>
</feature>
<feature type="active site">
    <location>
        <position position="99"/>
    </location>
</feature>
<feature type="active site" evidence="1">
    <location>
        <position position="102"/>
    </location>
</feature>
<feature type="binding site">
    <location>
        <position position="230"/>
    </location>
    <ligand>
        <name>Mn(2+)</name>
        <dbReference type="ChEBI" id="CHEBI:29035"/>
        <label>1</label>
    </ligand>
</feature>
<feature type="binding site">
    <location>
        <position position="266"/>
    </location>
    <ligand>
        <name>Mn(2+)</name>
        <dbReference type="ChEBI" id="CHEBI:29035"/>
        <label>1</label>
    </ligand>
</feature>
<feature type="binding site">
    <location>
        <position position="266"/>
    </location>
    <ligand>
        <name>Mn(2+)</name>
        <dbReference type="ChEBI" id="CHEBI:29035"/>
        <label>2</label>
    </ligand>
</feature>
<feature type="binding site">
    <location>
        <position position="294"/>
    </location>
    <ligand>
        <name>Mn(2+)</name>
        <dbReference type="ChEBI" id="CHEBI:29035"/>
        <label>1</label>
    </ligand>
</feature>
<feature type="binding site">
    <location>
        <position position="305"/>
    </location>
    <ligand>
        <name>Mn(2+)</name>
        <dbReference type="ChEBI" id="CHEBI:29035"/>
        <label>2</label>
    </ligand>
</feature>
<feature type="binding site">
    <location>
        <position position="307"/>
    </location>
    <ligand>
        <name>Mn(2+)</name>
        <dbReference type="ChEBI" id="CHEBI:29035"/>
        <label>2</label>
    </ligand>
</feature>
<feature type="binding site">
    <location>
        <position position="337"/>
    </location>
    <ligand>
        <name>Mn(2+)</name>
        <dbReference type="ChEBI" id="CHEBI:29035"/>
        <label>1</label>
    </ligand>
</feature>
<feature type="sequence conflict" description="In Ref. 1; CAA66715." evidence="2" ref="1">
    <original>A</original>
    <variation>R</variation>
    <location>
        <position position="248"/>
    </location>
</feature>
<feature type="strand" evidence="3">
    <location>
        <begin position="22"/>
        <end position="25"/>
    </location>
</feature>
<feature type="helix" evidence="3">
    <location>
        <begin position="37"/>
        <end position="41"/>
    </location>
</feature>
<feature type="strand" evidence="3">
    <location>
        <begin position="43"/>
        <end position="46"/>
    </location>
</feature>
<feature type="helix" evidence="3">
    <location>
        <begin position="47"/>
        <end position="52"/>
    </location>
</feature>
<feature type="helix" evidence="3">
    <location>
        <begin position="67"/>
        <end position="70"/>
    </location>
</feature>
<feature type="helix" evidence="3">
    <location>
        <begin position="73"/>
        <end position="91"/>
    </location>
</feature>
<feature type="strand" evidence="3">
    <location>
        <begin position="94"/>
        <end position="99"/>
    </location>
</feature>
<feature type="helix" evidence="3">
    <location>
        <begin position="100"/>
        <end position="103"/>
    </location>
</feature>
<feature type="helix" evidence="3">
    <location>
        <begin position="110"/>
        <end position="128"/>
    </location>
</feature>
<feature type="strand" evidence="3">
    <location>
        <begin position="134"/>
        <end position="139"/>
    </location>
</feature>
<feature type="strand" evidence="3">
    <location>
        <begin position="143"/>
        <end position="145"/>
    </location>
</feature>
<feature type="helix" evidence="3">
    <location>
        <begin position="146"/>
        <end position="148"/>
    </location>
</feature>
<feature type="helix" evidence="3">
    <location>
        <begin position="158"/>
        <end position="178"/>
    </location>
</feature>
<feature type="strand" evidence="3">
    <location>
        <begin position="181"/>
        <end position="185"/>
    </location>
</feature>
<feature type="strand" evidence="3">
    <location>
        <begin position="190"/>
        <end position="193"/>
    </location>
</feature>
<feature type="helix" evidence="3">
    <location>
        <begin position="195"/>
        <end position="197"/>
    </location>
</feature>
<feature type="helix" evidence="3">
    <location>
        <begin position="200"/>
        <end position="220"/>
    </location>
</feature>
<feature type="strand" evidence="3">
    <location>
        <begin position="225"/>
        <end position="229"/>
    </location>
</feature>
<feature type="strand" evidence="3">
    <location>
        <begin position="235"/>
        <end position="242"/>
    </location>
</feature>
<feature type="helix" evidence="3">
    <location>
        <begin position="245"/>
        <end position="254"/>
    </location>
</feature>
<feature type="helix" evidence="3">
    <location>
        <begin position="258"/>
        <end position="260"/>
    </location>
</feature>
<feature type="strand" evidence="3">
    <location>
        <begin position="261"/>
        <end position="266"/>
    </location>
</feature>
<feature type="helix" evidence="3">
    <location>
        <begin position="267"/>
        <end position="272"/>
    </location>
</feature>
<feature type="helix" evidence="3">
    <location>
        <begin position="277"/>
        <end position="286"/>
    </location>
</feature>
<feature type="strand" evidence="3">
    <location>
        <begin position="290"/>
        <end position="294"/>
    </location>
</feature>
<feature type="strand" evidence="3">
    <location>
        <begin position="302"/>
        <end position="304"/>
    </location>
</feature>
<feature type="helix" evidence="3">
    <location>
        <begin position="313"/>
        <end position="325"/>
    </location>
</feature>
<feature type="strand" evidence="3">
    <location>
        <begin position="334"/>
        <end position="336"/>
    </location>
</feature>
<feature type="helix" evidence="3">
    <location>
        <begin position="348"/>
        <end position="373"/>
    </location>
</feature>
<feature type="helix" evidence="3">
    <location>
        <begin position="376"/>
        <end position="384"/>
    </location>
</feature>
<feature type="helix" evidence="3">
    <location>
        <begin position="386"/>
        <end position="388"/>
    </location>
</feature>
<feature type="helix" evidence="3">
    <location>
        <begin position="391"/>
        <end position="398"/>
    </location>
</feature>
<feature type="helix" evidence="3">
    <location>
        <begin position="403"/>
        <end position="411"/>
    </location>
</feature>
<feature type="helix" evidence="3">
    <location>
        <begin position="423"/>
        <end position="435"/>
    </location>
</feature>
<sequence length="441" mass="50142">MPYFDNISTIAYEGPASKNPLAFKFYNPEEKVGDKTMEEHLRFSVAYWHTFTGDGSDPFGAGNMIRPWNKYSGMDLAKARVEAAFEFFEKLNIPFFCFHDVDIAPEGETLKETYKNLDIIVDMIEEYMKTSKTKLLWNTANLFTHPRFVHGAATSCNADVFAYAAAKVKKGLEIAKRLGAENYVFWGGREGYETLLNTDMKLELDNLARFLHMAVDYAKEIGFDGQFLIEPKPKEPTKHQYDFDVATALAFLQTYGLKDYFKFNIEANHATLAGHTFEHELRVARIHGMLGSVDANQGDMLLGWDTDEFPTDLYSTTLAMYEILKNGGLGRGGLNFDAKVRRGSFEPEDLFYAHIAGMDSFAVGLKVAHRLIEDRVFDEFIEERYKSYTEGIGREIVEGTADFHKLEAHALQLGEIQNQSGRQERLKTLLNQYLLEVCAAR</sequence>